<organism>
    <name type="scientific">Salmonella paratyphi A (strain ATCC 9150 / SARB42)</name>
    <dbReference type="NCBI Taxonomy" id="295319"/>
    <lineage>
        <taxon>Bacteria</taxon>
        <taxon>Pseudomonadati</taxon>
        <taxon>Pseudomonadota</taxon>
        <taxon>Gammaproteobacteria</taxon>
        <taxon>Enterobacterales</taxon>
        <taxon>Enterobacteriaceae</taxon>
        <taxon>Salmonella</taxon>
    </lineage>
</organism>
<name>RNH2_SALPA</name>
<comment type="function">
    <text evidence="1">Endonuclease that specifically degrades the RNA of RNA-DNA hybrids.</text>
</comment>
<comment type="catalytic activity">
    <reaction evidence="1">
        <text>Endonucleolytic cleavage to 5'-phosphomonoester.</text>
        <dbReference type="EC" id="3.1.26.4"/>
    </reaction>
</comment>
<comment type="cofactor">
    <cofactor evidence="1">
        <name>Mn(2+)</name>
        <dbReference type="ChEBI" id="CHEBI:29035"/>
    </cofactor>
    <cofactor evidence="1">
        <name>Mg(2+)</name>
        <dbReference type="ChEBI" id="CHEBI:18420"/>
    </cofactor>
    <text evidence="1">Manganese or magnesium. Binds 1 divalent metal ion per monomer in the absence of substrate. May bind a second metal ion after substrate binding.</text>
</comment>
<comment type="subcellular location">
    <subcellularLocation>
        <location evidence="1">Cytoplasm</location>
    </subcellularLocation>
</comment>
<comment type="similarity">
    <text evidence="1">Belongs to the RNase HII family.</text>
</comment>
<keyword id="KW-0963">Cytoplasm</keyword>
<keyword id="KW-0255">Endonuclease</keyword>
<keyword id="KW-0378">Hydrolase</keyword>
<keyword id="KW-0464">Manganese</keyword>
<keyword id="KW-0479">Metal-binding</keyword>
<keyword id="KW-0540">Nuclease</keyword>
<evidence type="ECO:0000255" key="1">
    <source>
        <dbReference type="HAMAP-Rule" id="MF_00052"/>
    </source>
</evidence>
<evidence type="ECO:0000255" key="2">
    <source>
        <dbReference type="PROSITE-ProRule" id="PRU01319"/>
    </source>
</evidence>
<feature type="chain" id="PRO_0000111616" description="Ribonuclease HII">
    <location>
        <begin position="1"/>
        <end position="198"/>
    </location>
</feature>
<feature type="domain" description="RNase H type-2" evidence="2">
    <location>
        <begin position="10"/>
        <end position="198"/>
    </location>
</feature>
<feature type="binding site" evidence="1">
    <location>
        <position position="16"/>
    </location>
    <ligand>
        <name>a divalent metal cation</name>
        <dbReference type="ChEBI" id="CHEBI:60240"/>
    </ligand>
</feature>
<feature type="binding site" evidence="1">
    <location>
        <position position="17"/>
    </location>
    <ligand>
        <name>a divalent metal cation</name>
        <dbReference type="ChEBI" id="CHEBI:60240"/>
    </ligand>
</feature>
<feature type="binding site" evidence="1">
    <location>
        <position position="108"/>
    </location>
    <ligand>
        <name>a divalent metal cation</name>
        <dbReference type="ChEBI" id="CHEBI:60240"/>
    </ligand>
</feature>
<reference key="1">
    <citation type="journal article" date="2004" name="Nat. Genet.">
        <title>Comparison of genome degradation in Paratyphi A and Typhi, human-restricted serovars of Salmonella enterica that cause typhoid.</title>
        <authorList>
            <person name="McClelland M."/>
            <person name="Sanderson K.E."/>
            <person name="Clifton S.W."/>
            <person name="Latreille P."/>
            <person name="Porwollik S."/>
            <person name="Sabo A."/>
            <person name="Meyer R."/>
            <person name="Bieri T."/>
            <person name="Ozersky P."/>
            <person name="McLellan M."/>
            <person name="Harkins C.R."/>
            <person name="Wang C."/>
            <person name="Nguyen C."/>
            <person name="Berghoff A."/>
            <person name="Elliott G."/>
            <person name="Kohlberg S."/>
            <person name="Strong C."/>
            <person name="Du F."/>
            <person name="Carter J."/>
            <person name="Kremizki C."/>
            <person name="Layman D."/>
            <person name="Leonard S."/>
            <person name="Sun H."/>
            <person name="Fulton L."/>
            <person name="Nash W."/>
            <person name="Miner T."/>
            <person name="Minx P."/>
            <person name="Delehaunty K."/>
            <person name="Fronick C."/>
            <person name="Magrini V."/>
            <person name="Nhan M."/>
            <person name="Warren W."/>
            <person name="Florea L."/>
            <person name="Spieth J."/>
            <person name="Wilson R.K."/>
        </authorList>
    </citation>
    <scope>NUCLEOTIDE SEQUENCE [LARGE SCALE GENOMIC DNA]</scope>
    <source>
        <strain>ATCC 9150 / SARB42</strain>
    </source>
</reference>
<accession>Q5PD71</accession>
<gene>
    <name evidence="1" type="primary">rnhB</name>
    <name type="ordered locus">SPA0237</name>
</gene>
<proteinExistence type="inferred from homology"/>
<dbReference type="EC" id="3.1.26.4" evidence="1"/>
<dbReference type="EMBL" id="CP000026">
    <property type="protein sequence ID" value="AAV76266.1"/>
    <property type="molecule type" value="Genomic_DNA"/>
</dbReference>
<dbReference type="RefSeq" id="WP_000569412.1">
    <property type="nucleotide sequence ID" value="NC_006511.1"/>
</dbReference>
<dbReference type="SMR" id="Q5PD71"/>
<dbReference type="KEGG" id="spt:SPA0237"/>
<dbReference type="HOGENOM" id="CLU_036532_3_2_6"/>
<dbReference type="Proteomes" id="UP000008185">
    <property type="component" value="Chromosome"/>
</dbReference>
<dbReference type="GO" id="GO:0005737">
    <property type="term" value="C:cytoplasm"/>
    <property type="evidence" value="ECO:0007669"/>
    <property type="project" value="UniProtKB-SubCell"/>
</dbReference>
<dbReference type="GO" id="GO:0032299">
    <property type="term" value="C:ribonuclease H2 complex"/>
    <property type="evidence" value="ECO:0007669"/>
    <property type="project" value="TreeGrafter"/>
</dbReference>
<dbReference type="GO" id="GO:0030145">
    <property type="term" value="F:manganese ion binding"/>
    <property type="evidence" value="ECO:0007669"/>
    <property type="project" value="UniProtKB-UniRule"/>
</dbReference>
<dbReference type="GO" id="GO:0003723">
    <property type="term" value="F:RNA binding"/>
    <property type="evidence" value="ECO:0007669"/>
    <property type="project" value="InterPro"/>
</dbReference>
<dbReference type="GO" id="GO:0004523">
    <property type="term" value="F:RNA-DNA hybrid ribonuclease activity"/>
    <property type="evidence" value="ECO:0007669"/>
    <property type="project" value="UniProtKB-UniRule"/>
</dbReference>
<dbReference type="GO" id="GO:0043137">
    <property type="term" value="P:DNA replication, removal of RNA primer"/>
    <property type="evidence" value="ECO:0007669"/>
    <property type="project" value="TreeGrafter"/>
</dbReference>
<dbReference type="GO" id="GO:0006298">
    <property type="term" value="P:mismatch repair"/>
    <property type="evidence" value="ECO:0007669"/>
    <property type="project" value="TreeGrafter"/>
</dbReference>
<dbReference type="CDD" id="cd07182">
    <property type="entry name" value="RNase_HII_bacteria_HII_like"/>
    <property type="match status" value="1"/>
</dbReference>
<dbReference type="FunFam" id="3.30.420.10:FF:000006">
    <property type="entry name" value="Ribonuclease HII"/>
    <property type="match status" value="1"/>
</dbReference>
<dbReference type="Gene3D" id="3.30.420.10">
    <property type="entry name" value="Ribonuclease H-like superfamily/Ribonuclease H"/>
    <property type="match status" value="1"/>
</dbReference>
<dbReference type="HAMAP" id="MF_00052_B">
    <property type="entry name" value="RNase_HII_B"/>
    <property type="match status" value="1"/>
</dbReference>
<dbReference type="InterPro" id="IPR022898">
    <property type="entry name" value="RNase_HII"/>
</dbReference>
<dbReference type="InterPro" id="IPR001352">
    <property type="entry name" value="RNase_HII/HIII"/>
</dbReference>
<dbReference type="InterPro" id="IPR024567">
    <property type="entry name" value="RNase_HII/HIII_dom"/>
</dbReference>
<dbReference type="InterPro" id="IPR012337">
    <property type="entry name" value="RNaseH-like_sf"/>
</dbReference>
<dbReference type="InterPro" id="IPR036397">
    <property type="entry name" value="RNaseH_sf"/>
</dbReference>
<dbReference type="NCBIfam" id="NF000594">
    <property type="entry name" value="PRK00015.1-1"/>
    <property type="match status" value="1"/>
</dbReference>
<dbReference type="NCBIfam" id="NF000595">
    <property type="entry name" value="PRK00015.1-3"/>
    <property type="match status" value="1"/>
</dbReference>
<dbReference type="NCBIfam" id="NF000596">
    <property type="entry name" value="PRK00015.1-4"/>
    <property type="match status" value="1"/>
</dbReference>
<dbReference type="PANTHER" id="PTHR10954">
    <property type="entry name" value="RIBONUCLEASE H2 SUBUNIT A"/>
    <property type="match status" value="1"/>
</dbReference>
<dbReference type="PANTHER" id="PTHR10954:SF18">
    <property type="entry name" value="RIBONUCLEASE HII"/>
    <property type="match status" value="1"/>
</dbReference>
<dbReference type="Pfam" id="PF01351">
    <property type="entry name" value="RNase_HII"/>
    <property type="match status" value="1"/>
</dbReference>
<dbReference type="SUPFAM" id="SSF53098">
    <property type="entry name" value="Ribonuclease H-like"/>
    <property type="match status" value="1"/>
</dbReference>
<dbReference type="PROSITE" id="PS51975">
    <property type="entry name" value="RNASE_H_2"/>
    <property type="match status" value="1"/>
</dbReference>
<protein>
    <recommendedName>
        <fullName evidence="1">Ribonuclease HII</fullName>
        <shortName evidence="1">RNase HII</shortName>
        <ecNumber evidence="1">3.1.26.4</ecNumber>
    </recommendedName>
</protein>
<sequence>MIEFVYPHTHLVAGVDEVGRGPLVGAVVTAAVILDPARPIVGLNDSKKLSEKRRLSLYDEIKEKALSWSLGRAEAHEIDELNILHATMLAMQRAVAGLHIAPEYVLIDGNRCPELPVPSMAVVKGDSRVAEISAASILAKVTRDAEMAALDIVFPQYGFAQHKGYPTAFHLEKLAQYGATAHHRRSFAPVKRALGLVS</sequence>